<accession>O94769</accession>
<accession>B2R730</accession>
<accession>E2PU11</accession>
<accession>Q5T9F2</accession>
<accession>Q7Z3D0</accession>
<proteinExistence type="evidence at protein level"/>
<name>ECM2_HUMAN</name>
<dbReference type="EMBL" id="AB011792">
    <property type="protein sequence ID" value="BAA33958.1"/>
    <property type="molecule type" value="mRNA"/>
</dbReference>
<dbReference type="EMBL" id="AK312820">
    <property type="protein sequence ID" value="BAG35677.1"/>
    <property type="molecule type" value="mRNA"/>
</dbReference>
<dbReference type="EMBL" id="BX537976">
    <property type="protein sequence ID" value="CAD97940.1"/>
    <property type="status" value="ALT_INIT"/>
    <property type="molecule type" value="mRNA"/>
</dbReference>
<dbReference type="EMBL" id="AL137848">
    <property type="status" value="NOT_ANNOTATED_CDS"/>
    <property type="molecule type" value="Genomic_DNA"/>
</dbReference>
<dbReference type="EMBL" id="AL157827">
    <property type="status" value="NOT_ANNOTATED_CDS"/>
    <property type="molecule type" value="Genomic_DNA"/>
</dbReference>
<dbReference type="EMBL" id="CH471089">
    <property type="protein sequence ID" value="EAW62824.1"/>
    <property type="molecule type" value="Genomic_DNA"/>
</dbReference>
<dbReference type="EMBL" id="BC107493">
    <property type="protein sequence ID" value="AAI07494.1"/>
    <property type="molecule type" value="mRNA"/>
</dbReference>
<dbReference type="CCDS" id="CCDS56578.1">
    <molecule id="O94769-2"/>
</dbReference>
<dbReference type="CCDS" id="CCDS6698.1">
    <molecule id="O94769-1"/>
</dbReference>
<dbReference type="RefSeq" id="NP_001184224.1">
    <property type="nucleotide sequence ID" value="NM_001197295.1"/>
</dbReference>
<dbReference type="RefSeq" id="NP_001184225.1">
    <molecule id="O94769-2"/>
    <property type="nucleotide sequence ID" value="NM_001197296.2"/>
</dbReference>
<dbReference type="RefSeq" id="NP_001384.1">
    <molecule id="O94769-1"/>
    <property type="nucleotide sequence ID" value="NM_001393.4"/>
</dbReference>
<dbReference type="RefSeq" id="XP_024303203.1">
    <molecule id="O94769-1"/>
    <property type="nucleotide sequence ID" value="XM_024447435.2"/>
</dbReference>
<dbReference type="RefSeq" id="XP_024303204.1">
    <molecule id="O94769-1"/>
    <property type="nucleotide sequence ID" value="XM_024447436.2"/>
</dbReference>
<dbReference type="RefSeq" id="XP_047278855.1">
    <molecule id="O94769-1"/>
    <property type="nucleotide sequence ID" value="XM_047422899.1"/>
</dbReference>
<dbReference type="RefSeq" id="XP_054189060.1">
    <molecule id="O94769-1"/>
    <property type="nucleotide sequence ID" value="XM_054333085.1"/>
</dbReference>
<dbReference type="RefSeq" id="XP_054189061.1">
    <molecule id="O94769-1"/>
    <property type="nucleotide sequence ID" value="XM_054333086.1"/>
</dbReference>
<dbReference type="SMR" id="O94769"/>
<dbReference type="BioGRID" id="108175">
    <property type="interactions" value="1"/>
</dbReference>
<dbReference type="FunCoup" id="O94769">
    <property type="interactions" value="28"/>
</dbReference>
<dbReference type="IntAct" id="O94769">
    <property type="interactions" value="1"/>
</dbReference>
<dbReference type="STRING" id="9606.ENSP00000344758"/>
<dbReference type="GlyConnect" id="1229">
    <property type="glycosylation" value="3 N-Linked glycans (1 site)"/>
</dbReference>
<dbReference type="GlyCosmos" id="O94769">
    <property type="glycosylation" value="5 sites, 6 glycans"/>
</dbReference>
<dbReference type="GlyGen" id="O94769">
    <property type="glycosylation" value="6 sites, 18 N-linked glycans (1 site), 3 O-linked glycans (2 sites)"/>
</dbReference>
<dbReference type="iPTMnet" id="O94769"/>
<dbReference type="PhosphoSitePlus" id="O94769"/>
<dbReference type="BioMuta" id="ECM2"/>
<dbReference type="MassIVE" id="O94769"/>
<dbReference type="PaxDb" id="9606-ENSP00000344758"/>
<dbReference type="PeptideAtlas" id="O94769"/>
<dbReference type="ProteomicsDB" id="50433">
    <molecule id="O94769-1"/>
</dbReference>
<dbReference type="ProteomicsDB" id="50434">
    <molecule id="O94769-2"/>
</dbReference>
<dbReference type="Antibodypedia" id="43750">
    <property type="antibodies" value="32 antibodies from 14 providers"/>
</dbReference>
<dbReference type="DNASU" id="1842"/>
<dbReference type="Ensembl" id="ENST00000344604.10">
    <molecule id="O94769-1"/>
    <property type="protein sequence ID" value="ENSP00000344758.5"/>
    <property type="gene ID" value="ENSG00000106823.13"/>
</dbReference>
<dbReference type="Ensembl" id="ENST00000444490.6">
    <molecule id="O94769-2"/>
    <property type="protein sequence ID" value="ENSP00000393971.2"/>
    <property type="gene ID" value="ENSG00000106823.13"/>
</dbReference>
<dbReference type="Ensembl" id="ENST00000707290.1">
    <molecule id="O94769-2"/>
    <property type="protein sequence ID" value="ENSP00000516826.1"/>
    <property type="gene ID" value="ENSG00000291357.1"/>
</dbReference>
<dbReference type="Ensembl" id="ENST00000707291.1">
    <molecule id="O94769-1"/>
    <property type="protein sequence ID" value="ENSP00000516827.1"/>
    <property type="gene ID" value="ENSG00000291357.1"/>
</dbReference>
<dbReference type="GeneID" id="1842"/>
<dbReference type="KEGG" id="hsa:1842"/>
<dbReference type="MANE-Select" id="ENST00000344604.10">
    <property type="protein sequence ID" value="ENSP00000344758.5"/>
    <property type="RefSeq nucleotide sequence ID" value="NM_001393.4"/>
    <property type="RefSeq protein sequence ID" value="NP_001384.1"/>
</dbReference>
<dbReference type="UCSC" id="uc004asf.5">
    <molecule id="O94769-1"/>
    <property type="organism name" value="human"/>
</dbReference>
<dbReference type="AGR" id="HGNC:3154"/>
<dbReference type="CTD" id="1842"/>
<dbReference type="DisGeNET" id="1842"/>
<dbReference type="GeneCards" id="ECM2"/>
<dbReference type="HGNC" id="HGNC:3154">
    <property type="gene designation" value="ECM2"/>
</dbReference>
<dbReference type="HPA" id="ENSG00000106823">
    <property type="expression patterns" value="Tissue enhanced (adipose tissue, ovary)"/>
</dbReference>
<dbReference type="MIM" id="603479">
    <property type="type" value="gene"/>
</dbReference>
<dbReference type="neXtProt" id="NX_O94769"/>
<dbReference type="OpenTargets" id="ENSG00000106823"/>
<dbReference type="PharmGKB" id="PA27599"/>
<dbReference type="VEuPathDB" id="HostDB:ENSG00000106823"/>
<dbReference type="eggNOG" id="KOG0619">
    <property type="taxonomic scope" value="Eukaryota"/>
</dbReference>
<dbReference type="GeneTree" id="ENSGT00940000159941"/>
<dbReference type="HOGENOM" id="CLU_000288_186_2_1"/>
<dbReference type="InParanoid" id="O94769"/>
<dbReference type="OMA" id="MTMYNRA"/>
<dbReference type="OrthoDB" id="676979at2759"/>
<dbReference type="PAN-GO" id="O94769">
    <property type="GO annotations" value="5 GO annotations based on evolutionary models"/>
</dbReference>
<dbReference type="PhylomeDB" id="O94769"/>
<dbReference type="TreeFam" id="TF330031"/>
<dbReference type="PathwayCommons" id="O94769"/>
<dbReference type="SignaLink" id="O94769"/>
<dbReference type="BioGRID-ORCS" id="1842">
    <property type="hits" value="14 hits in 1149 CRISPR screens"/>
</dbReference>
<dbReference type="ChiTaRS" id="ECM2">
    <property type="organism name" value="human"/>
</dbReference>
<dbReference type="GeneWiki" id="ECM2"/>
<dbReference type="GenomeRNAi" id="1842"/>
<dbReference type="Pharos" id="O94769">
    <property type="development level" value="Tdark"/>
</dbReference>
<dbReference type="PRO" id="PR:O94769"/>
<dbReference type="Proteomes" id="UP000005640">
    <property type="component" value="Chromosome 9"/>
</dbReference>
<dbReference type="RNAct" id="O94769">
    <property type="molecule type" value="protein"/>
</dbReference>
<dbReference type="Bgee" id="ENSG00000106823">
    <property type="expression patterns" value="Expressed in calcaneal tendon and 194 other cell types or tissues"/>
</dbReference>
<dbReference type="ExpressionAtlas" id="O94769">
    <property type="expression patterns" value="baseline and differential"/>
</dbReference>
<dbReference type="GO" id="GO:0031012">
    <property type="term" value="C:extracellular matrix"/>
    <property type="evidence" value="ECO:0000318"/>
    <property type="project" value="GO_Central"/>
</dbReference>
<dbReference type="GO" id="GO:0005576">
    <property type="term" value="C:extracellular region"/>
    <property type="evidence" value="ECO:0007669"/>
    <property type="project" value="UniProtKB-KW"/>
</dbReference>
<dbReference type="GO" id="GO:0005614">
    <property type="term" value="C:interstitial matrix"/>
    <property type="evidence" value="ECO:0007669"/>
    <property type="project" value="Ensembl"/>
</dbReference>
<dbReference type="GO" id="GO:0070052">
    <property type="term" value="F:collagen V binding"/>
    <property type="evidence" value="ECO:0000318"/>
    <property type="project" value="GO_Central"/>
</dbReference>
<dbReference type="GO" id="GO:0008201">
    <property type="term" value="F:heparin binding"/>
    <property type="evidence" value="ECO:0000318"/>
    <property type="project" value="GO_Central"/>
</dbReference>
<dbReference type="GO" id="GO:0005178">
    <property type="term" value="F:integrin binding"/>
    <property type="evidence" value="ECO:0000304"/>
    <property type="project" value="ProtInc"/>
</dbReference>
<dbReference type="GO" id="GO:0007160">
    <property type="term" value="P:cell-matrix adhesion"/>
    <property type="evidence" value="ECO:0000304"/>
    <property type="project" value="ProtInc"/>
</dbReference>
<dbReference type="GO" id="GO:0030198">
    <property type="term" value="P:extracellular matrix organization"/>
    <property type="evidence" value="ECO:0000318"/>
    <property type="project" value="GO_Central"/>
</dbReference>
<dbReference type="GO" id="GO:0010811">
    <property type="term" value="P:positive regulation of cell-substrate adhesion"/>
    <property type="evidence" value="ECO:0000318"/>
    <property type="project" value="GO_Central"/>
</dbReference>
<dbReference type="FunFam" id="3.80.10.10:FF:000130">
    <property type="entry name" value="extracellular matrix protein 2 isoform X1"/>
    <property type="match status" value="1"/>
</dbReference>
<dbReference type="FunFam" id="3.80.10.10:FF:000284">
    <property type="entry name" value="extracellular matrix protein 2 isoform X1"/>
    <property type="match status" value="1"/>
</dbReference>
<dbReference type="FunFam" id="3.80.10.10:FF:000332">
    <property type="entry name" value="extracellular matrix protein 2 isoform X1"/>
    <property type="match status" value="1"/>
</dbReference>
<dbReference type="Gene3D" id="6.20.200.20">
    <property type="match status" value="1"/>
</dbReference>
<dbReference type="Gene3D" id="3.80.10.10">
    <property type="entry name" value="Ribonuclease Inhibitor"/>
    <property type="match status" value="4"/>
</dbReference>
<dbReference type="InterPro" id="IPR043184">
    <property type="entry name" value="ECM2"/>
</dbReference>
<dbReference type="InterPro" id="IPR001611">
    <property type="entry name" value="Leu-rich_rpt"/>
</dbReference>
<dbReference type="InterPro" id="IPR025875">
    <property type="entry name" value="Leu-rich_rpt_4"/>
</dbReference>
<dbReference type="InterPro" id="IPR003591">
    <property type="entry name" value="Leu-rich_rpt_typical-subtyp"/>
</dbReference>
<dbReference type="InterPro" id="IPR032675">
    <property type="entry name" value="LRR_dom_sf"/>
</dbReference>
<dbReference type="InterPro" id="IPR001007">
    <property type="entry name" value="VWF_dom"/>
</dbReference>
<dbReference type="PANTHER" id="PTHR46544:SF1">
    <property type="entry name" value="EXTRACELLULAR MATRIX PROTEIN 2"/>
    <property type="match status" value="1"/>
</dbReference>
<dbReference type="PANTHER" id="PTHR46544">
    <property type="entry name" value="EXTRACELLULAR MATRIX PROTEIN 2-RELATED"/>
    <property type="match status" value="1"/>
</dbReference>
<dbReference type="Pfam" id="PF12799">
    <property type="entry name" value="LRR_4"/>
    <property type="match status" value="1"/>
</dbReference>
<dbReference type="Pfam" id="PF13855">
    <property type="entry name" value="LRR_8"/>
    <property type="match status" value="2"/>
</dbReference>
<dbReference type="Pfam" id="PF00093">
    <property type="entry name" value="VWC"/>
    <property type="match status" value="1"/>
</dbReference>
<dbReference type="SMART" id="SM00364">
    <property type="entry name" value="LRR_BAC"/>
    <property type="match status" value="4"/>
</dbReference>
<dbReference type="SMART" id="SM00369">
    <property type="entry name" value="LRR_TYP"/>
    <property type="match status" value="12"/>
</dbReference>
<dbReference type="SMART" id="SM00214">
    <property type="entry name" value="VWC"/>
    <property type="match status" value="1"/>
</dbReference>
<dbReference type="SUPFAM" id="SSF57603">
    <property type="entry name" value="FnI-like domain"/>
    <property type="match status" value="1"/>
</dbReference>
<dbReference type="SUPFAM" id="SSF52047">
    <property type="entry name" value="RNI-like"/>
    <property type="match status" value="1"/>
</dbReference>
<dbReference type="PROSITE" id="PS51450">
    <property type="entry name" value="LRR"/>
    <property type="match status" value="12"/>
</dbReference>
<dbReference type="PROSITE" id="PS01208">
    <property type="entry name" value="VWFC_1"/>
    <property type="match status" value="1"/>
</dbReference>
<dbReference type="PROSITE" id="PS50184">
    <property type="entry name" value="VWFC_2"/>
    <property type="match status" value="1"/>
</dbReference>
<feature type="signal peptide" evidence="2">
    <location>
        <begin position="1"/>
        <end position="20"/>
    </location>
</feature>
<feature type="chain" id="PRO_0000032731" description="Extracellular matrix protein 2">
    <location>
        <begin position="21"/>
        <end position="699"/>
    </location>
</feature>
<feature type="domain" description="VWFC" evidence="3">
    <location>
        <begin position="101"/>
        <end position="158"/>
    </location>
</feature>
<feature type="domain" description="LRRNT">
    <location>
        <begin position="307"/>
        <end position="344"/>
    </location>
</feature>
<feature type="repeat" description="LRR 1">
    <location>
        <begin position="368"/>
        <end position="388"/>
    </location>
</feature>
<feature type="repeat" description="LRR 2">
    <location>
        <begin position="394"/>
        <end position="415"/>
    </location>
</feature>
<feature type="repeat" description="LRR 3">
    <location>
        <begin position="416"/>
        <end position="436"/>
    </location>
</feature>
<feature type="repeat" description="LRR 4">
    <location>
        <begin position="439"/>
        <end position="459"/>
    </location>
</feature>
<feature type="repeat" description="LRR 5">
    <location>
        <begin position="465"/>
        <end position="484"/>
    </location>
</feature>
<feature type="repeat" description="LRR 6">
    <location>
        <begin position="486"/>
        <end position="507"/>
    </location>
</feature>
<feature type="repeat" description="LRR 7">
    <location>
        <begin position="510"/>
        <end position="530"/>
    </location>
</feature>
<feature type="repeat" description="LRR 8">
    <location>
        <begin position="536"/>
        <end position="557"/>
    </location>
</feature>
<feature type="repeat" description="LRR 9">
    <location>
        <begin position="558"/>
        <end position="578"/>
    </location>
</feature>
<feature type="repeat" description="LRR 10">
    <location>
        <begin position="582"/>
        <end position="602"/>
    </location>
</feature>
<feature type="repeat" description="LRR 11">
    <location>
        <begin position="609"/>
        <end position="630"/>
    </location>
</feature>
<feature type="repeat" description="LRR 12">
    <location>
        <begin position="632"/>
        <end position="653"/>
    </location>
</feature>
<feature type="repeat" description="LRR 13">
    <location>
        <begin position="661"/>
        <end position="684"/>
    </location>
</feature>
<feature type="region of interest" description="Disordered" evidence="4">
    <location>
        <begin position="176"/>
        <end position="316"/>
    </location>
</feature>
<feature type="short sequence motif" description="Cell attachment site" evidence="2">
    <location>
        <begin position="294"/>
        <end position="296"/>
    </location>
</feature>
<feature type="compositionally biased region" description="Basic and acidic residues" evidence="4">
    <location>
        <begin position="176"/>
        <end position="186"/>
    </location>
</feature>
<feature type="compositionally biased region" description="Acidic residues" evidence="4">
    <location>
        <begin position="212"/>
        <end position="224"/>
    </location>
</feature>
<feature type="compositionally biased region" description="Basic and acidic residues" evidence="4">
    <location>
        <begin position="243"/>
        <end position="260"/>
    </location>
</feature>
<feature type="compositionally biased region" description="Acidic residues" evidence="4">
    <location>
        <begin position="270"/>
        <end position="291"/>
    </location>
</feature>
<feature type="glycosylation site" description="N-linked (GlcNAc...) asparagine" evidence="2">
    <location>
        <position position="378"/>
    </location>
</feature>
<feature type="glycosylation site" description="N-linked (GlcNAc...) asparagine" evidence="2">
    <location>
        <position position="449"/>
    </location>
</feature>
<feature type="glycosylation site" description="N-linked (GlcNAc...) asparagine" evidence="2">
    <location>
        <position position="506"/>
    </location>
</feature>
<feature type="splice variant" id="VSP_039114" description="In isoform 2." evidence="7">
    <location>
        <begin position="161"/>
        <end position="182"/>
    </location>
</feature>
<feature type="splice variant" id="VSP_039115" description="In isoform 2." evidence="7">
    <original>NILPEEICNAEEDDDSNLEHLHLENNYIKIREIPSYTFSCIRSYSSIVLKPQNIK</original>
    <variation>CVSDAVLETVTNRSDVAFPLW</variation>
    <location>
        <begin position="645"/>
        <end position="699"/>
    </location>
</feature>
<feature type="sequence variant" id="VAR_024646" description="In dbSNP:rs10120210." evidence="5">
    <original>Q</original>
    <variation>P</variation>
    <location>
        <position position="56"/>
    </location>
</feature>
<feature type="sequence variant" id="VAR_052010" description="In dbSNP:rs35496743.">
    <original>T</original>
    <variation>S</variation>
    <location>
        <position position="109"/>
    </location>
</feature>
<feature type="sequence variant" id="VAR_052011" description="In dbSNP:rs34758505.">
    <original>R</original>
    <variation>Q</variation>
    <location>
        <position position="204"/>
    </location>
</feature>
<reference key="1">
    <citation type="journal article" date="1998" name="Genomics">
        <title>Identification of a novel gene (ECM2) encoding a putative extracellular matrix protein expressed predominantly in adipose and female-specific tissues and its chromosomal localization to 9q22.3.</title>
        <authorList>
            <person name="Nishiu J."/>
            <person name="Tanaka T."/>
            <person name="Nakamura Y."/>
        </authorList>
    </citation>
    <scope>NUCLEOTIDE SEQUENCE [MRNA] (ISOFORM 1)</scope>
    <scope>TISSUE SPECIFICITY</scope>
</reference>
<reference key="2">
    <citation type="journal article" date="2004" name="Nat. Genet.">
        <title>Complete sequencing and characterization of 21,243 full-length human cDNAs.</title>
        <authorList>
            <person name="Ota T."/>
            <person name="Suzuki Y."/>
            <person name="Nishikawa T."/>
            <person name="Otsuki T."/>
            <person name="Sugiyama T."/>
            <person name="Irie R."/>
            <person name="Wakamatsu A."/>
            <person name="Hayashi K."/>
            <person name="Sato H."/>
            <person name="Nagai K."/>
            <person name="Kimura K."/>
            <person name="Makita H."/>
            <person name="Sekine M."/>
            <person name="Obayashi M."/>
            <person name="Nishi T."/>
            <person name="Shibahara T."/>
            <person name="Tanaka T."/>
            <person name="Ishii S."/>
            <person name="Yamamoto J."/>
            <person name="Saito K."/>
            <person name="Kawai Y."/>
            <person name="Isono Y."/>
            <person name="Nakamura Y."/>
            <person name="Nagahari K."/>
            <person name="Murakami K."/>
            <person name="Yasuda T."/>
            <person name="Iwayanagi T."/>
            <person name="Wagatsuma M."/>
            <person name="Shiratori A."/>
            <person name="Sudo H."/>
            <person name="Hosoiri T."/>
            <person name="Kaku Y."/>
            <person name="Kodaira H."/>
            <person name="Kondo H."/>
            <person name="Sugawara M."/>
            <person name="Takahashi M."/>
            <person name="Kanda K."/>
            <person name="Yokoi T."/>
            <person name="Furuya T."/>
            <person name="Kikkawa E."/>
            <person name="Omura Y."/>
            <person name="Abe K."/>
            <person name="Kamihara K."/>
            <person name="Katsuta N."/>
            <person name="Sato K."/>
            <person name="Tanikawa M."/>
            <person name="Yamazaki M."/>
            <person name="Ninomiya K."/>
            <person name="Ishibashi T."/>
            <person name="Yamashita H."/>
            <person name="Murakawa K."/>
            <person name="Fujimori K."/>
            <person name="Tanai H."/>
            <person name="Kimata M."/>
            <person name="Watanabe M."/>
            <person name="Hiraoka S."/>
            <person name="Chiba Y."/>
            <person name="Ishida S."/>
            <person name="Ono Y."/>
            <person name="Takiguchi S."/>
            <person name="Watanabe S."/>
            <person name="Yosida M."/>
            <person name="Hotuta T."/>
            <person name="Kusano J."/>
            <person name="Kanehori K."/>
            <person name="Takahashi-Fujii A."/>
            <person name="Hara H."/>
            <person name="Tanase T.-O."/>
            <person name="Nomura Y."/>
            <person name="Togiya S."/>
            <person name="Komai F."/>
            <person name="Hara R."/>
            <person name="Takeuchi K."/>
            <person name="Arita M."/>
            <person name="Imose N."/>
            <person name="Musashino K."/>
            <person name="Yuuki H."/>
            <person name="Oshima A."/>
            <person name="Sasaki N."/>
            <person name="Aotsuka S."/>
            <person name="Yoshikawa Y."/>
            <person name="Matsunawa H."/>
            <person name="Ichihara T."/>
            <person name="Shiohata N."/>
            <person name="Sano S."/>
            <person name="Moriya S."/>
            <person name="Momiyama H."/>
            <person name="Satoh N."/>
            <person name="Takami S."/>
            <person name="Terashima Y."/>
            <person name="Suzuki O."/>
            <person name="Nakagawa S."/>
            <person name="Senoh A."/>
            <person name="Mizoguchi H."/>
            <person name="Goto Y."/>
            <person name="Shimizu F."/>
            <person name="Wakebe H."/>
            <person name="Hishigaki H."/>
            <person name="Watanabe T."/>
            <person name="Sugiyama A."/>
            <person name="Takemoto M."/>
            <person name="Kawakami B."/>
            <person name="Yamazaki M."/>
            <person name="Watanabe K."/>
            <person name="Kumagai A."/>
            <person name="Itakura S."/>
            <person name="Fukuzumi Y."/>
            <person name="Fujimori Y."/>
            <person name="Komiyama M."/>
            <person name="Tashiro H."/>
            <person name="Tanigami A."/>
            <person name="Fujiwara T."/>
            <person name="Ono T."/>
            <person name="Yamada K."/>
            <person name="Fujii Y."/>
            <person name="Ozaki K."/>
            <person name="Hirao M."/>
            <person name="Ohmori Y."/>
            <person name="Kawabata A."/>
            <person name="Hikiji T."/>
            <person name="Kobatake N."/>
            <person name="Inagaki H."/>
            <person name="Ikema Y."/>
            <person name="Okamoto S."/>
            <person name="Okitani R."/>
            <person name="Kawakami T."/>
            <person name="Noguchi S."/>
            <person name="Itoh T."/>
            <person name="Shigeta K."/>
            <person name="Senba T."/>
            <person name="Matsumura K."/>
            <person name="Nakajima Y."/>
            <person name="Mizuno T."/>
            <person name="Morinaga M."/>
            <person name="Sasaki M."/>
            <person name="Togashi T."/>
            <person name="Oyama M."/>
            <person name="Hata H."/>
            <person name="Watanabe M."/>
            <person name="Komatsu T."/>
            <person name="Mizushima-Sugano J."/>
            <person name="Satoh T."/>
            <person name="Shirai Y."/>
            <person name="Takahashi Y."/>
            <person name="Nakagawa K."/>
            <person name="Okumura K."/>
            <person name="Nagase T."/>
            <person name="Nomura N."/>
            <person name="Kikuchi H."/>
            <person name="Masuho Y."/>
            <person name="Yamashita R."/>
            <person name="Nakai K."/>
            <person name="Yada T."/>
            <person name="Nakamura Y."/>
            <person name="Ohara O."/>
            <person name="Isogai T."/>
            <person name="Sugano S."/>
        </authorList>
    </citation>
    <scope>NUCLEOTIDE SEQUENCE [LARGE SCALE MRNA] (ISOFORM 1)</scope>
    <source>
        <tissue>Testis</tissue>
    </source>
</reference>
<reference key="3">
    <citation type="journal article" date="2007" name="BMC Genomics">
        <title>The full-ORF clone resource of the German cDNA consortium.</title>
        <authorList>
            <person name="Bechtel S."/>
            <person name="Rosenfelder H."/>
            <person name="Duda A."/>
            <person name="Schmidt C.P."/>
            <person name="Ernst U."/>
            <person name="Wellenreuther R."/>
            <person name="Mehrle A."/>
            <person name="Schuster C."/>
            <person name="Bahr A."/>
            <person name="Bloecker H."/>
            <person name="Heubner D."/>
            <person name="Hoerlein A."/>
            <person name="Michel G."/>
            <person name="Wedler H."/>
            <person name="Koehrer K."/>
            <person name="Ottenwaelder B."/>
            <person name="Poustka A."/>
            <person name="Wiemann S."/>
            <person name="Schupp I."/>
        </authorList>
    </citation>
    <scope>NUCLEOTIDE SEQUENCE [LARGE SCALE MRNA] (ISOFORM 2)</scope>
    <scope>VARIANT PRO-56</scope>
    <source>
        <tissue>Retina</tissue>
    </source>
</reference>
<reference key="4">
    <citation type="journal article" date="2004" name="Nature">
        <title>DNA sequence and analysis of human chromosome 9.</title>
        <authorList>
            <person name="Humphray S.J."/>
            <person name="Oliver K."/>
            <person name="Hunt A.R."/>
            <person name="Plumb R.W."/>
            <person name="Loveland J.E."/>
            <person name="Howe K.L."/>
            <person name="Andrews T.D."/>
            <person name="Searle S."/>
            <person name="Hunt S.E."/>
            <person name="Scott C.E."/>
            <person name="Jones M.C."/>
            <person name="Ainscough R."/>
            <person name="Almeida J.P."/>
            <person name="Ambrose K.D."/>
            <person name="Ashwell R.I.S."/>
            <person name="Babbage A.K."/>
            <person name="Babbage S."/>
            <person name="Bagguley C.L."/>
            <person name="Bailey J."/>
            <person name="Banerjee R."/>
            <person name="Barker D.J."/>
            <person name="Barlow K.F."/>
            <person name="Bates K."/>
            <person name="Beasley H."/>
            <person name="Beasley O."/>
            <person name="Bird C.P."/>
            <person name="Bray-Allen S."/>
            <person name="Brown A.J."/>
            <person name="Brown J.Y."/>
            <person name="Burford D."/>
            <person name="Burrill W."/>
            <person name="Burton J."/>
            <person name="Carder C."/>
            <person name="Carter N.P."/>
            <person name="Chapman J.C."/>
            <person name="Chen Y."/>
            <person name="Clarke G."/>
            <person name="Clark S.Y."/>
            <person name="Clee C.M."/>
            <person name="Clegg S."/>
            <person name="Collier R.E."/>
            <person name="Corby N."/>
            <person name="Crosier M."/>
            <person name="Cummings A.T."/>
            <person name="Davies J."/>
            <person name="Dhami P."/>
            <person name="Dunn M."/>
            <person name="Dutta I."/>
            <person name="Dyer L.W."/>
            <person name="Earthrowl M.E."/>
            <person name="Faulkner L."/>
            <person name="Fleming C.J."/>
            <person name="Frankish A."/>
            <person name="Frankland J.A."/>
            <person name="French L."/>
            <person name="Fricker D.G."/>
            <person name="Garner P."/>
            <person name="Garnett J."/>
            <person name="Ghori J."/>
            <person name="Gilbert J.G.R."/>
            <person name="Glison C."/>
            <person name="Grafham D.V."/>
            <person name="Gribble S."/>
            <person name="Griffiths C."/>
            <person name="Griffiths-Jones S."/>
            <person name="Grocock R."/>
            <person name="Guy J."/>
            <person name="Hall R.E."/>
            <person name="Hammond S."/>
            <person name="Harley J.L."/>
            <person name="Harrison E.S.I."/>
            <person name="Hart E.A."/>
            <person name="Heath P.D."/>
            <person name="Henderson C.D."/>
            <person name="Hopkins B.L."/>
            <person name="Howard P.J."/>
            <person name="Howden P.J."/>
            <person name="Huckle E."/>
            <person name="Johnson C."/>
            <person name="Johnson D."/>
            <person name="Joy A.A."/>
            <person name="Kay M."/>
            <person name="Keenan S."/>
            <person name="Kershaw J.K."/>
            <person name="Kimberley A.M."/>
            <person name="King A."/>
            <person name="Knights A."/>
            <person name="Laird G.K."/>
            <person name="Langford C."/>
            <person name="Lawlor S."/>
            <person name="Leongamornlert D.A."/>
            <person name="Leversha M."/>
            <person name="Lloyd C."/>
            <person name="Lloyd D.M."/>
            <person name="Lovell J."/>
            <person name="Martin S."/>
            <person name="Mashreghi-Mohammadi M."/>
            <person name="Matthews L."/>
            <person name="McLaren S."/>
            <person name="McLay K.E."/>
            <person name="McMurray A."/>
            <person name="Milne S."/>
            <person name="Nickerson T."/>
            <person name="Nisbett J."/>
            <person name="Nordsiek G."/>
            <person name="Pearce A.V."/>
            <person name="Peck A.I."/>
            <person name="Porter K.M."/>
            <person name="Pandian R."/>
            <person name="Pelan S."/>
            <person name="Phillimore B."/>
            <person name="Povey S."/>
            <person name="Ramsey Y."/>
            <person name="Rand V."/>
            <person name="Scharfe M."/>
            <person name="Sehra H.K."/>
            <person name="Shownkeen R."/>
            <person name="Sims S.K."/>
            <person name="Skuce C.D."/>
            <person name="Smith M."/>
            <person name="Steward C.A."/>
            <person name="Swarbreck D."/>
            <person name="Sycamore N."/>
            <person name="Tester J."/>
            <person name="Thorpe A."/>
            <person name="Tracey A."/>
            <person name="Tromans A."/>
            <person name="Thomas D.W."/>
            <person name="Wall M."/>
            <person name="Wallis J.M."/>
            <person name="West A.P."/>
            <person name="Whitehead S.L."/>
            <person name="Willey D.L."/>
            <person name="Williams S.A."/>
            <person name="Wilming L."/>
            <person name="Wray P.W."/>
            <person name="Young L."/>
            <person name="Ashurst J.L."/>
            <person name="Coulson A."/>
            <person name="Blocker H."/>
            <person name="Durbin R.M."/>
            <person name="Sulston J.E."/>
            <person name="Hubbard T."/>
            <person name="Jackson M.J."/>
            <person name="Bentley D.R."/>
            <person name="Beck S."/>
            <person name="Rogers J."/>
            <person name="Dunham I."/>
        </authorList>
    </citation>
    <scope>NUCLEOTIDE SEQUENCE [LARGE SCALE GENOMIC DNA]</scope>
</reference>
<reference key="5">
    <citation type="submission" date="2005-07" db="EMBL/GenBank/DDBJ databases">
        <authorList>
            <person name="Mural R.J."/>
            <person name="Istrail S."/>
            <person name="Sutton G.G."/>
            <person name="Florea L."/>
            <person name="Halpern A.L."/>
            <person name="Mobarry C.M."/>
            <person name="Lippert R."/>
            <person name="Walenz B."/>
            <person name="Shatkay H."/>
            <person name="Dew I."/>
            <person name="Miller J.R."/>
            <person name="Flanigan M.J."/>
            <person name="Edwards N.J."/>
            <person name="Bolanos R."/>
            <person name="Fasulo D."/>
            <person name="Halldorsson B.V."/>
            <person name="Hannenhalli S."/>
            <person name="Turner R."/>
            <person name="Yooseph S."/>
            <person name="Lu F."/>
            <person name="Nusskern D.R."/>
            <person name="Shue B.C."/>
            <person name="Zheng X.H."/>
            <person name="Zhong F."/>
            <person name="Delcher A.L."/>
            <person name="Huson D.H."/>
            <person name="Kravitz S.A."/>
            <person name="Mouchard L."/>
            <person name="Reinert K."/>
            <person name="Remington K.A."/>
            <person name="Clark A.G."/>
            <person name="Waterman M.S."/>
            <person name="Eichler E.E."/>
            <person name="Adams M.D."/>
            <person name="Hunkapiller M.W."/>
            <person name="Myers E.W."/>
            <person name="Venter J.C."/>
        </authorList>
    </citation>
    <scope>NUCLEOTIDE SEQUENCE [LARGE SCALE GENOMIC DNA]</scope>
</reference>
<reference key="6">
    <citation type="journal article" date="2004" name="Genome Res.">
        <title>The status, quality, and expansion of the NIH full-length cDNA project: the Mammalian Gene Collection (MGC).</title>
        <authorList>
            <consortium name="The MGC Project Team"/>
        </authorList>
    </citation>
    <scope>NUCLEOTIDE SEQUENCE [LARGE SCALE MRNA] (ISOFORM 1)</scope>
</reference>
<sequence>MKIAVLFCFFLLIIFQTDFGKNEEIPRKQRRKIYHRRLRKSSTSHKHRSNRQLGIQQTTVFTPVARLPIVNFDYSMEEKFESFSSFPGVESSYNVLPGKKGHCLVKGITMYNKAVWSPEPCTTCLCSDGRVLCDETMCHPQRCPQTVIPEGECCPVCSATVSYSLLSGIALNDRNEFSGDSSEQREPTNLLHKQLPPPQVGMDRIVRKEALQSEEDEEVKEEDTEQKRETPESRNQGQLYSEGDSRGGDRKQRPGEERRLAHQQQRQGREEEEDEEEEGEEGEEDEEDEEDPVRGDMFRMPSRSPLPAPPRGTLRLPSGCSLSYRTISCINAMLTQIPPLTAPQITSLELTGNSIASIPDEAFNGLPNLERLDLSKNNITSSGIGPKAFKLLKKLMRLNMDGNNLIQIPSQLPSTLEELKVNENNLQAIDEESLSDLNQLVTLELEGNNLSEANVNPLAFKPLKSLAYLRLGKNKFRIIPQGLPGSIEELYLENNQIEEITEICFNHTRKINVIVLRYNKIEENRIAPLAWINQENLESIDLSYNKLYHVPSYLPKSLLHLVLLGNQIERIPGYVFGHMEPGLEYLYLSFNKLADDGMDRVSFYGAYHSLRELFLDHNDLKSIPPGIQEMKALHFLRLNNNKIRNILPEEICNAEEDDDSNLEHLHLENNYIKIREIPSYTFSCIRSYSSIVLKPQNIK</sequence>
<keyword id="KW-0025">Alternative splicing</keyword>
<keyword id="KW-0272">Extracellular matrix</keyword>
<keyword id="KW-0325">Glycoprotein</keyword>
<keyword id="KW-0433">Leucine-rich repeat</keyword>
<keyword id="KW-1267">Proteomics identification</keyword>
<keyword id="KW-1185">Reference proteome</keyword>
<keyword id="KW-0677">Repeat</keyword>
<keyword id="KW-0964">Secreted</keyword>
<keyword id="KW-0732">Signal</keyword>
<comment type="function">
    <text evidence="1">Promotes matrix assembly and cell adhesiveness.</text>
</comment>
<comment type="subunit">
    <text evidence="1">Interacts with numerous extracellular matrix proteins (By similarity). Interacts with MSL1 and RASSF1 (By similarity).</text>
</comment>
<comment type="subcellular location">
    <subcellularLocation>
        <location evidence="1">Secreted</location>
        <location evidence="1">Extracellular space</location>
        <location evidence="1">Extracellular matrix</location>
    </subcellularLocation>
</comment>
<comment type="alternative products">
    <event type="alternative splicing"/>
    <isoform>
        <id>O94769-1</id>
        <name>1</name>
        <sequence type="displayed"/>
    </isoform>
    <isoform>
        <id>O94769-2</id>
        <name>2</name>
        <sequence type="described" ref="VSP_039114 VSP_039115"/>
    </isoform>
</comment>
<comment type="tissue specificity">
    <text evidence="6">Expressed predominantly in adipose tissue as well as female-specific organs such as mammary gland, ovary, and uterus.</text>
</comment>
<comment type="similarity">
    <text evidence="8">Belongs to the small leucine-rich proteoglycan (SLRP) family. SLRP class I subfamily.</text>
</comment>
<comment type="sequence caution" evidence="8">
    <conflict type="erroneous initiation">
        <sequence resource="EMBL-CDS" id="CAD97940"/>
    </conflict>
    <text>Extended N-terminus.</text>
</comment>
<organism>
    <name type="scientific">Homo sapiens</name>
    <name type="common">Human</name>
    <dbReference type="NCBI Taxonomy" id="9606"/>
    <lineage>
        <taxon>Eukaryota</taxon>
        <taxon>Metazoa</taxon>
        <taxon>Chordata</taxon>
        <taxon>Craniata</taxon>
        <taxon>Vertebrata</taxon>
        <taxon>Euteleostomi</taxon>
        <taxon>Mammalia</taxon>
        <taxon>Eutheria</taxon>
        <taxon>Euarchontoglires</taxon>
        <taxon>Primates</taxon>
        <taxon>Haplorrhini</taxon>
        <taxon>Catarrhini</taxon>
        <taxon>Hominidae</taxon>
        <taxon>Homo</taxon>
    </lineage>
</organism>
<evidence type="ECO:0000250" key="1">
    <source>
        <dbReference type="UniProtKB" id="Q5FW85"/>
    </source>
</evidence>
<evidence type="ECO:0000255" key="2"/>
<evidence type="ECO:0000255" key="3">
    <source>
        <dbReference type="PROSITE-ProRule" id="PRU00220"/>
    </source>
</evidence>
<evidence type="ECO:0000256" key="4">
    <source>
        <dbReference type="SAM" id="MobiDB-lite"/>
    </source>
</evidence>
<evidence type="ECO:0000269" key="5">
    <source>
    </source>
</evidence>
<evidence type="ECO:0000269" key="6">
    <source>
    </source>
</evidence>
<evidence type="ECO:0000303" key="7">
    <source>
    </source>
</evidence>
<evidence type="ECO:0000305" key="8"/>
<protein>
    <recommendedName>
        <fullName>Extracellular matrix protein 2</fullName>
    </recommendedName>
    <alternativeName>
        <fullName>Matrix glycoprotein SC1/ECM2</fullName>
    </alternativeName>
</protein>
<gene>
    <name type="primary">ECM2</name>
</gene>